<accession>Q63SL6</accession>
<name>FOLD_BURPS</name>
<keyword id="KW-0028">Amino-acid biosynthesis</keyword>
<keyword id="KW-0368">Histidine biosynthesis</keyword>
<keyword id="KW-0378">Hydrolase</keyword>
<keyword id="KW-0486">Methionine biosynthesis</keyword>
<keyword id="KW-0511">Multifunctional enzyme</keyword>
<keyword id="KW-0521">NADP</keyword>
<keyword id="KW-0554">One-carbon metabolism</keyword>
<keyword id="KW-0560">Oxidoreductase</keyword>
<keyword id="KW-0658">Purine biosynthesis</keyword>
<keyword id="KW-1185">Reference proteome</keyword>
<gene>
    <name evidence="1" type="primary">folD</name>
    <name type="ordered locus">BPSL2304</name>
</gene>
<feature type="chain" id="PRO_0000268299" description="Bifunctional protein FolD">
    <location>
        <begin position="1"/>
        <end position="285"/>
    </location>
</feature>
<feature type="binding site" evidence="1">
    <location>
        <begin position="165"/>
        <end position="167"/>
    </location>
    <ligand>
        <name>NADP(+)</name>
        <dbReference type="ChEBI" id="CHEBI:58349"/>
    </ligand>
</feature>
<feature type="binding site" evidence="1">
    <location>
        <position position="190"/>
    </location>
    <ligand>
        <name>NADP(+)</name>
        <dbReference type="ChEBI" id="CHEBI:58349"/>
    </ligand>
</feature>
<proteinExistence type="inferred from homology"/>
<reference key="1">
    <citation type="journal article" date="2004" name="Proc. Natl. Acad. Sci. U.S.A.">
        <title>Genomic plasticity of the causative agent of melioidosis, Burkholderia pseudomallei.</title>
        <authorList>
            <person name="Holden M.T.G."/>
            <person name="Titball R.W."/>
            <person name="Peacock S.J."/>
            <person name="Cerdeno-Tarraga A.-M."/>
            <person name="Atkins T."/>
            <person name="Crossman L.C."/>
            <person name="Pitt T."/>
            <person name="Churcher C."/>
            <person name="Mungall K.L."/>
            <person name="Bentley S.D."/>
            <person name="Sebaihia M."/>
            <person name="Thomson N.R."/>
            <person name="Bason N."/>
            <person name="Beacham I.R."/>
            <person name="Brooks K."/>
            <person name="Brown K.A."/>
            <person name="Brown N.F."/>
            <person name="Challis G.L."/>
            <person name="Cherevach I."/>
            <person name="Chillingworth T."/>
            <person name="Cronin A."/>
            <person name="Crossett B."/>
            <person name="Davis P."/>
            <person name="DeShazer D."/>
            <person name="Feltwell T."/>
            <person name="Fraser A."/>
            <person name="Hance Z."/>
            <person name="Hauser H."/>
            <person name="Holroyd S."/>
            <person name="Jagels K."/>
            <person name="Keith K.E."/>
            <person name="Maddison M."/>
            <person name="Moule S."/>
            <person name="Price C."/>
            <person name="Quail M.A."/>
            <person name="Rabbinowitsch E."/>
            <person name="Rutherford K."/>
            <person name="Sanders M."/>
            <person name="Simmonds M."/>
            <person name="Songsivilai S."/>
            <person name="Stevens K."/>
            <person name="Tumapa S."/>
            <person name="Vesaratchavest M."/>
            <person name="Whitehead S."/>
            <person name="Yeats C."/>
            <person name="Barrell B.G."/>
            <person name="Oyston P.C.F."/>
            <person name="Parkhill J."/>
        </authorList>
    </citation>
    <scope>NUCLEOTIDE SEQUENCE [LARGE SCALE GENOMIC DNA]</scope>
    <source>
        <strain>K96243</strain>
    </source>
</reference>
<evidence type="ECO:0000255" key="1">
    <source>
        <dbReference type="HAMAP-Rule" id="MF_01576"/>
    </source>
</evidence>
<sequence>MTATLIDGNALSKTLRAQAAERAAALAARGHRPGLAVILVGDNPASEVYVRNKIKACEDNGFFSLKDRYPATLSEPELLARIDELNRDPKIHGILVQLPLPAHIDSHKVIEAIAPEKDVDGFHVANAGALLTGKPLFRPCTPYGVMKMFEAYKIPLQGANAVVIGRSNIVGKPMALLLLEAGATVTICHSKTRELAAHTRAADIVVAAVGKRNVLTADMVKPGATVIDVGMNRNDEGKLCGDVDFAGVSQVAGHITPVPGGVGPMTITMLLVNTIEAAERAAAAA</sequence>
<dbReference type="EC" id="1.5.1.5" evidence="1"/>
<dbReference type="EC" id="3.5.4.9" evidence="1"/>
<dbReference type="EMBL" id="BX571965">
    <property type="protein sequence ID" value="CAH36307.1"/>
    <property type="molecule type" value="Genomic_DNA"/>
</dbReference>
<dbReference type="RefSeq" id="WP_004524717.1">
    <property type="nucleotide sequence ID" value="NZ_CP009538.1"/>
</dbReference>
<dbReference type="RefSeq" id="YP_108900.1">
    <property type="nucleotide sequence ID" value="NC_006350.1"/>
</dbReference>
<dbReference type="SMR" id="Q63SL6"/>
<dbReference type="STRING" id="272560.BPSL2304"/>
<dbReference type="KEGG" id="bps:BPSL2304"/>
<dbReference type="PATRIC" id="fig|272560.51.peg.3123"/>
<dbReference type="eggNOG" id="COG0190">
    <property type="taxonomic scope" value="Bacteria"/>
</dbReference>
<dbReference type="UniPathway" id="UPA00193"/>
<dbReference type="Proteomes" id="UP000000605">
    <property type="component" value="Chromosome 1"/>
</dbReference>
<dbReference type="GO" id="GO:0005829">
    <property type="term" value="C:cytosol"/>
    <property type="evidence" value="ECO:0007669"/>
    <property type="project" value="TreeGrafter"/>
</dbReference>
<dbReference type="GO" id="GO:0004477">
    <property type="term" value="F:methenyltetrahydrofolate cyclohydrolase activity"/>
    <property type="evidence" value="ECO:0007669"/>
    <property type="project" value="UniProtKB-UniRule"/>
</dbReference>
<dbReference type="GO" id="GO:0004488">
    <property type="term" value="F:methylenetetrahydrofolate dehydrogenase (NADP+) activity"/>
    <property type="evidence" value="ECO:0007669"/>
    <property type="project" value="UniProtKB-UniRule"/>
</dbReference>
<dbReference type="GO" id="GO:0000105">
    <property type="term" value="P:L-histidine biosynthetic process"/>
    <property type="evidence" value="ECO:0007669"/>
    <property type="project" value="UniProtKB-KW"/>
</dbReference>
<dbReference type="GO" id="GO:0009086">
    <property type="term" value="P:methionine biosynthetic process"/>
    <property type="evidence" value="ECO:0007669"/>
    <property type="project" value="UniProtKB-KW"/>
</dbReference>
<dbReference type="GO" id="GO:0006164">
    <property type="term" value="P:purine nucleotide biosynthetic process"/>
    <property type="evidence" value="ECO:0007669"/>
    <property type="project" value="UniProtKB-KW"/>
</dbReference>
<dbReference type="GO" id="GO:0035999">
    <property type="term" value="P:tetrahydrofolate interconversion"/>
    <property type="evidence" value="ECO:0007669"/>
    <property type="project" value="UniProtKB-UniRule"/>
</dbReference>
<dbReference type="CDD" id="cd01080">
    <property type="entry name" value="NAD_bind_m-THF_DH_Cyclohyd"/>
    <property type="match status" value="1"/>
</dbReference>
<dbReference type="FunFam" id="3.40.50.720:FF:000094">
    <property type="entry name" value="Bifunctional protein FolD"/>
    <property type="match status" value="1"/>
</dbReference>
<dbReference type="FunFam" id="3.40.50.10860:FF:000005">
    <property type="entry name" value="C-1-tetrahydrofolate synthase, cytoplasmic, putative"/>
    <property type="match status" value="1"/>
</dbReference>
<dbReference type="Gene3D" id="3.40.50.10860">
    <property type="entry name" value="Leucine Dehydrogenase, chain A, domain 1"/>
    <property type="match status" value="1"/>
</dbReference>
<dbReference type="Gene3D" id="3.40.50.720">
    <property type="entry name" value="NAD(P)-binding Rossmann-like Domain"/>
    <property type="match status" value="1"/>
</dbReference>
<dbReference type="HAMAP" id="MF_01576">
    <property type="entry name" value="THF_DHG_CYH"/>
    <property type="match status" value="1"/>
</dbReference>
<dbReference type="InterPro" id="IPR046346">
    <property type="entry name" value="Aminoacid_DH-like_N_sf"/>
</dbReference>
<dbReference type="InterPro" id="IPR036291">
    <property type="entry name" value="NAD(P)-bd_dom_sf"/>
</dbReference>
<dbReference type="InterPro" id="IPR000672">
    <property type="entry name" value="THF_DH/CycHdrlase"/>
</dbReference>
<dbReference type="InterPro" id="IPR020630">
    <property type="entry name" value="THF_DH/CycHdrlase_cat_dom"/>
</dbReference>
<dbReference type="InterPro" id="IPR020867">
    <property type="entry name" value="THF_DH/CycHdrlase_CS"/>
</dbReference>
<dbReference type="InterPro" id="IPR020631">
    <property type="entry name" value="THF_DH/CycHdrlase_NAD-bd_dom"/>
</dbReference>
<dbReference type="NCBIfam" id="NF008058">
    <property type="entry name" value="PRK10792.1"/>
    <property type="match status" value="1"/>
</dbReference>
<dbReference type="NCBIfam" id="NF010783">
    <property type="entry name" value="PRK14186.1"/>
    <property type="match status" value="1"/>
</dbReference>
<dbReference type="NCBIfam" id="NF010786">
    <property type="entry name" value="PRK14189.1"/>
    <property type="match status" value="1"/>
</dbReference>
<dbReference type="PANTHER" id="PTHR48099:SF5">
    <property type="entry name" value="C-1-TETRAHYDROFOLATE SYNTHASE, CYTOPLASMIC"/>
    <property type="match status" value="1"/>
</dbReference>
<dbReference type="PANTHER" id="PTHR48099">
    <property type="entry name" value="C-1-TETRAHYDROFOLATE SYNTHASE, CYTOPLASMIC-RELATED"/>
    <property type="match status" value="1"/>
</dbReference>
<dbReference type="Pfam" id="PF00763">
    <property type="entry name" value="THF_DHG_CYH"/>
    <property type="match status" value="1"/>
</dbReference>
<dbReference type="Pfam" id="PF02882">
    <property type="entry name" value="THF_DHG_CYH_C"/>
    <property type="match status" value="1"/>
</dbReference>
<dbReference type="PRINTS" id="PR00085">
    <property type="entry name" value="THFDHDRGNASE"/>
</dbReference>
<dbReference type="SUPFAM" id="SSF53223">
    <property type="entry name" value="Aminoacid dehydrogenase-like, N-terminal domain"/>
    <property type="match status" value="1"/>
</dbReference>
<dbReference type="SUPFAM" id="SSF51735">
    <property type="entry name" value="NAD(P)-binding Rossmann-fold domains"/>
    <property type="match status" value="1"/>
</dbReference>
<dbReference type="PROSITE" id="PS00766">
    <property type="entry name" value="THF_DHG_CYH_1"/>
    <property type="match status" value="1"/>
</dbReference>
<dbReference type="PROSITE" id="PS00767">
    <property type="entry name" value="THF_DHG_CYH_2"/>
    <property type="match status" value="1"/>
</dbReference>
<protein>
    <recommendedName>
        <fullName evidence="1">Bifunctional protein FolD</fullName>
    </recommendedName>
    <domain>
        <recommendedName>
            <fullName evidence="1">Methylenetetrahydrofolate dehydrogenase</fullName>
            <ecNumber evidence="1">1.5.1.5</ecNumber>
        </recommendedName>
    </domain>
    <domain>
        <recommendedName>
            <fullName evidence="1">Methenyltetrahydrofolate cyclohydrolase</fullName>
            <ecNumber evidence="1">3.5.4.9</ecNumber>
        </recommendedName>
    </domain>
</protein>
<comment type="function">
    <text evidence="1">Catalyzes the oxidation of 5,10-methylenetetrahydrofolate to 5,10-methenyltetrahydrofolate and then the hydrolysis of 5,10-methenyltetrahydrofolate to 10-formyltetrahydrofolate.</text>
</comment>
<comment type="catalytic activity">
    <reaction evidence="1">
        <text>(6R)-5,10-methylene-5,6,7,8-tetrahydrofolate + NADP(+) = (6R)-5,10-methenyltetrahydrofolate + NADPH</text>
        <dbReference type="Rhea" id="RHEA:22812"/>
        <dbReference type="ChEBI" id="CHEBI:15636"/>
        <dbReference type="ChEBI" id="CHEBI:57455"/>
        <dbReference type="ChEBI" id="CHEBI:57783"/>
        <dbReference type="ChEBI" id="CHEBI:58349"/>
        <dbReference type="EC" id="1.5.1.5"/>
    </reaction>
</comment>
<comment type="catalytic activity">
    <reaction evidence="1">
        <text>(6R)-5,10-methenyltetrahydrofolate + H2O = (6R)-10-formyltetrahydrofolate + H(+)</text>
        <dbReference type="Rhea" id="RHEA:23700"/>
        <dbReference type="ChEBI" id="CHEBI:15377"/>
        <dbReference type="ChEBI" id="CHEBI:15378"/>
        <dbReference type="ChEBI" id="CHEBI:57455"/>
        <dbReference type="ChEBI" id="CHEBI:195366"/>
        <dbReference type="EC" id="3.5.4.9"/>
    </reaction>
</comment>
<comment type="pathway">
    <text evidence="1">One-carbon metabolism; tetrahydrofolate interconversion.</text>
</comment>
<comment type="subunit">
    <text evidence="1">Homodimer.</text>
</comment>
<comment type="similarity">
    <text evidence="1">Belongs to the tetrahydrofolate dehydrogenase/cyclohydrolase family.</text>
</comment>
<organism>
    <name type="scientific">Burkholderia pseudomallei (strain K96243)</name>
    <dbReference type="NCBI Taxonomy" id="272560"/>
    <lineage>
        <taxon>Bacteria</taxon>
        <taxon>Pseudomonadati</taxon>
        <taxon>Pseudomonadota</taxon>
        <taxon>Betaproteobacteria</taxon>
        <taxon>Burkholderiales</taxon>
        <taxon>Burkholderiaceae</taxon>
        <taxon>Burkholderia</taxon>
        <taxon>pseudomallei group</taxon>
    </lineage>
</organism>